<keyword id="KW-0131">Cell cycle</keyword>
<keyword id="KW-0132">Cell division</keyword>
<keyword id="KW-0175">Coiled coil</keyword>
<keyword id="KW-0963">Cytoplasm</keyword>
<keyword id="KW-0235">DNA replication</keyword>
<keyword id="KW-0238">DNA-binding</keyword>
<keyword id="KW-0498">Mitosis</keyword>
<keyword id="KW-0507">mRNA processing</keyword>
<keyword id="KW-0508">mRNA splicing</keyword>
<keyword id="KW-0539">Nucleus</keyword>
<keyword id="KW-1185">Reference proteome</keyword>
<keyword id="KW-0690">Ribosome biogenesis</keyword>
<keyword id="KW-0694">RNA-binding</keyword>
<accession>Q7T293</accession>
<sequence length="467" mass="51381">MELFVISPDLKFNNLTVAPDSTVSDLIDHFTVKNGVSLTDFYVSSNGRLSRSNDLLQSGVVYRLEPRLCGGKGGFGSMLRALGAQIEKTTNREACRDLSGRRLRDVNHEKEMAEWLKKQADREAEKEQRRLERIQRKLAEPKHYFTDTNYEQQCHDLSERLEDSVLKGMQASSSGLVQADEGPSLKRANPTDSKKKAKKKCYWTGMAGLEEMASSSEGSDDSDSEVSPSTSGASCSSGFPKPVVSAHKADPQEQPSSSSPAQRKHNQEELQKRDKEECTSEISSSSSSPAANNEKLNQEETNEISSSSSSPAPKPTEVNQQEMETEMECTAQISSSSSSPAEHSEEEVQQTAERVEKMAEEVQKTAEEVQKKTEESTAEISPSSSIPEEKSQVLSQVEDPLDLLSVSGPEQLEALGLERLKKELMERGMKCGGTLQERAARLFSVKGLTPDQIDPSLLAKPSKGKKK</sequence>
<name>SDE2_DANRE</name>
<protein>
    <recommendedName>
        <fullName evidence="5">Splicing regulator SDE2</fullName>
    </recommendedName>
    <alternativeName>
        <fullName evidence="5">Replication stress response regulator SDE2</fullName>
    </alternativeName>
</protein>
<evidence type="ECO:0000250" key="1">
    <source>
        <dbReference type="UniProtKB" id="O14113"/>
    </source>
</evidence>
<evidence type="ECO:0000250" key="2">
    <source>
        <dbReference type="UniProtKB" id="Q6IQ49"/>
    </source>
</evidence>
<evidence type="ECO:0000255" key="3"/>
<evidence type="ECO:0000256" key="4">
    <source>
        <dbReference type="SAM" id="MobiDB-lite"/>
    </source>
</evidence>
<evidence type="ECO:0000305" key="5"/>
<proteinExistence type="evidence at transcript level"/>
<comment type="function">
    <text evidence="2">Inhibits translesion DNA synthesis by preventing monoubiquitination of PCNA, this is necessary to counteract damage due to ultraviolet light-induced replication stress (By similarity). SDE2 is cleaved following PCNA binding, and its complete degradation is necessary to allow S-phase progression following DNA damage (By similarity).</text>
</comment>
<comment type="function">
    <text evidence="1 2">Plays a role in pre-mRNA splicing by facilitating excision of relatively short introns featuring weak 3'-splice sites (ss) and high GC content (By similarity). May recruit CACTIN to the spliceosome (By similarity).</text>
</comment>
<comment type="function">
    <text evidence="2">Plays a role in ribosome biogenesis by enabling SNORD3- and SNORD118-dependent cleavage of the 47S rRNA precursor (By similarity). Binds ncRNA (non-coding RNA) including the snoRNAs SNORD3 and SNORD118 (By similarity).</text>
</comment>
<comment type="subcellular location">
    <subcellularLocation>
        <location evidence="2">Nucleus</location>
    </subcellularLocation>
    <subcellularLocation>
        <location evidence="2">Cytoplasm</location>
    </subcellularLocation>
</comment>
<comment type="domain">
    <text evidence="2">The PIP-box (PCNA interacting peptide) motif mediates both the interaction with PCNA and cleavage of the SDE2 precursor by a deubiquitinating enzyme.</text>
</comment>
<comment type="domain">
    <text evidence="2">The SAP domain is necessary for specific binding to DNA.</text>
</comment>
<comment type="domain">
    <text evidence="2">The propeptide displays a ubiquitin-like fold.</text>
</comment>
<comment type="PTM">
    <text evidence="2">Upon binding to PCNA, the N-terminal UBL (ubiquitin-like) propeptide is cleaved at Gly-71 by an unidentified deubiquitinating enzyme; the resulting mature SDE2 is degraded by the DCX(DTL) complex in a cell cycle- and DNA damage dependent manner.</text>
</comment>
<comment type="similarity">
    <text evidence="5">Belongs to the SDE2 family.</text>
</comment>
<comment type="sequence caution" evidence="5">
    <conflict type="erroneous initiation">
        <sequence resource="EMBL-CDS" id="AAH54640"/>
    </conflict>
    <text>Extended N-terminus.</text>
</comment>
<reference key="1">
    <citation type="submission" date="2003-07" db="EMBL/GenBank/DDBJ databases">
        <authorList>
            <consortium name="NIH - Zebrafish Gene Collection (ZGC) project"/>
        </authorList>
    </citation>
    <scope>NUCLEOTIDE SEQUENCE [LARGE SCALE MRNA]</scope>
    <source>
        <tissue>Embryo</tissue>
    </source>
</reference>
<organism>
    <name type="scientific">Danio rerio</name>
    <name type="common">Zebrafish</name>
    <name type="synonym">Brachydanio rerio</name>
    <dbReference type="NCBI Taxonomy" id="7955"/>
    <lineage>
        <taxon>Eukaryota</taxon>
        <taxon>Metazoa</taxon>
        <taxon>Chordata</taxon>
        <taxon>Craniata</taxon>
        <taxon>Vertebrata</taxon>
        <taxon>Euteleostomi</taxon>
        <taxon>Actinopterygii</taxon>
        <taxon>Neopterygii</taxon>
        <taxon>Teleostei</taxon>
        <taxon>Ostariophysi</taxon>
        <taxon>Cypriniformes</taxon>
        <taxon>Danionidae</taxon>
        <taxon>Danioninae</taxon>
        <taxon>Danio</taxon>
    </lineage>
</organism>
<feature type="propeptide" id="PRO_0000442525" description="UBL" evidence="2">
    <location>
        <begin position="1"/>
        <end position="71"/>
    </location>
</feature>
<feature type="chain" id="PRO_0000286088" description="Splicing regulator SDE2">
    <location>
        <begin position="72"/>
        <end position="467"/>
    </location>
</feature>
<feature type="domain" description="SAP" evidence="3">
    <location>
        <begin position="412"/>
        <end position="446"/>
    </location>
</feature>
<feature type="region of interest" description="Disordered" evidence="4">
    <location>
        <begin position="173"/>
        <end position="199"/>
    </location>
</feature>
<feature type="region of interest" description="Disordered" evidence="4">
    <location>
        <begin position="212"/>
        <end position="395"/>
    </location>
</feature>
<feature type="coiled-coil region" evidence="3">
    <location>
        <begin position="107"/>
        <end position="143"/>
    </location>
</feature>
<feature type="coiled-coil region" evidence="3">
    <location>
        <begin position="341"/>
        <end position="381"/>
    </location>
</feature>
<feature type="short sequence motif" description="PIP-box" evidence="2">
    <location>
        <begin position="33"/>
        <end position="46"/>
    </location>
</feature>
<feature type="compositionally biased region" description="Low complexity" evidence="4">
    <location>
        <begin position="225"/>
        <end position="237"/>
    </location>
</feature>
<feature type="compositionally biased region" description="Low complexity" evidence="4">
    <location>
        <begin position="252"/>
        <end position="261"/>
    </location>
</feature>
<feature type="compositionally biased region" description="Basic and acidic residues" evidence="4">
    <location>
        <begin position="265"/>
        <end position="278"/>
    </location>
</feature>
<feature type="compositionally biased region" description="Basic and acidic residues" evidence="4">
    <location>
        <begin position="353"/>
        <end position="375"/>
    </location>
</feature>
<feature type="site" description="Cleavage" evidence="2">
    <location>
        <begin position="71"/>
        <end position="72"/>
    </location>
</feature>
<gene>
    <name type="primary">sde2</name>
    <name type="ORF">zgc:112095</name>
</gene>
<dbReference type="EMBL" id="BC054640">
    <property type="protein sequence ID" value="AAH54640.1"/>
    <property type="status" value="ALT_INIT"/>
    <property type="molecule type" value="mRNA"/>
</dbReference>
<dbReference type="RefSeq" id="NP_001017752.2">
    <property type="nucleotide sequence ID" value="NM_001017752.2"/>
</dbReference>
<dbReference type="SMR" id="Q7T293"/>
<dbReference type="FunCoup" id="Q7T293">
    <property type="interactions" value="1143"/>
</dbReference>
<dbReference type="STRING" id="7955.ENSDARP00000043773"/>
<dbReference type="PaxDb" id="7955-ENSDARP00000043773"/>
<dbReference type="Ensembl" id="ENSDART00000183044">
    <property type="protein sequence ID" value="ENSDARP00000149480"/>
    <property type="gene ID" value="ENSDARG00000109881"/>
</dbReference>
<dbReference type="GeneID" id="550448"/>
<dbReference type="KEGG" id="dre:550448"/>
<dbReference type="AGR" id="ZFIN:ZDB-GENE-050417-270"/>
<dbReference type="CTD" id="163859"/>
<dbReference type="ZFIN" id="ZDB-GENE-050417-270">
    <property type="gene designation" value="sde2"/>
</dbReference>
<dbReference type="eggNOG" id="KOG2827">
    <property type="taxonomic scope" value="Eukaryota"/>
</dbReference>
<dbReference type="InParanoid" id="Q7T293"/>
<dbReference type="OMA" id="YWMNDYK"/>
<dbReference type="OrthoDB" id="547031at2759"/>
<dbReference type="PhylomeDB" id="Q7T293"/>
<dbReference type="Reactome" id="R-DRE-72163">
    <property type="pathway name" value="mRNA Splicing - Major Pathway"/>
</dbReference>
<dbReference type="PRO" id="PR:Q7T293"/>
<dbReference type="Proteomes" id="UP000000437">
    <property type="component" value="Alternate scaffold 22"/>
</dbReference>
<dbReference type="Proteomes" id="UP000000437">
    <property type="component" value="Chromosome 22"/>
</dbReference>
<dbReference type="GO" id="GO:0005737">
    <property type="term" value="C:cytoplasm"/>
    <property type="evidence" value="ECO:0000250"/>
    <property type="project" value="UniProtKB"/>
</dbReference>
<dbReference type="GO" id="GO:0005634">
    <property type="term" value="C:nucleus"/>
    <property type="evidence" value="ECO:0000250"/>
    <property type="project" value="UniProtKB"/>
</dbReference>
<dbReference type="GO" id="GO:0003677">
    <property type="term" value="F:DNA binding"/>
    <property type="evidence" value="ECO:0007669"/>
    <property type="project" value="UniProtKB-KW"/>
</dbReference>
<dbReference type="GO" id="GO:0030515">
    <property type="term" value="F:snoRNA binding"/>
    <property type="evidence" value="ECO:0000250"/>
    <property type="project" value="UniProtKB"/>
</dbReference>
<dbReference type="GO" id="GO:0051301">
    <property type="term" value="P:cell division"/>
    <property type="evidence" value="ECO:0007669"/>
    <property type="project" value="UniProtKB-KW"/>
</dbReference>
<dbReference type="GO" id="GO:0006260">
    <property type="term" value="P:DNA replication"/>
    <property type="evidence" value="ECO:0007669"/>
    <property type="project" value="UniProtKB-KW"/>
</dbReference>
<dbReference type="GO" id="GO:0000479">
    <property type="term" value="P:endonucleolytic cleavage of tricistronic rRNA transcript (SSU-rRNA, 5.8S rRNA, LSU-rRNA)"/>
    <property type="evidence" value="ECO:0000250"/>
    <property type="project" value="UniProtKB"/>
</dbReference>
<dbReference type="GO" id="GO:0045292">
    <property type="term" value="P:mRNA cis splicing, via spliceosome"/>
    <property type="evidence" value="ECO:0000250"/>
    <property type="project" value="UniProtKB"/>
</dbReference>
<dbReference type="InterPro" id="IPR051421">
    <property type="entry name" value="RNA_Proc_DNA_Dmg_Regulator"/>
</dbReference>
<dbReference type="InterPro" id="IPR053822">
    <property type="entry name" value="SDE2-like_dom"/>
</dbReference>
<dbReference type="InterPro" id="IPR025086">
    <property type="entry name" value="SDE2/SF3A3_SAP"/>
</dbReference>
<dbReference type="InterPro" id="IPR053821">
    <property type="entry name" value="Sde2_Ubi"/>
</dbReference>
<dbReference type="PANTHER" id="PTHR12786">
    <property type="entry name" value="SPLICING FACTOR SF3A-RELATED"/>
    <property type="match status" value="1"/>
</dbReference>
<dbReference type="PANTHER" id="PTHR12786:SF1">
    <property type="entry name" value="SPLICING REGULATOR SDE2"/>
    <property type="match status" value="1"/>
</dbReference>
<dbReference type="Pfam" id="PF22782">
    <property type="entry name" value="SDE2"/>
    <property type="match status" value="1"/>
</dbReference>
<dbReference type="Pfam" id="PF13297">
    <property type="entry name" value="SDE2_2C"/>
    <property type="match status" value="1"/>
</dbReference>
<dbReference type="Pfam" id="PF22781">
    <property type="entry name" value="Sde2_N_Ubi_vert"/>
    <property type="match status" value="1"/>
</dbReference>